<gene>
    <name evidence="2" type="primary">Eef1akmt4-Ece2</name>
</gene>
<keyword id="KW-0025">Alternative splicing</keyword>
<keyword id="KW-0968">Cytoplasmic vesicle</keyword>
<keyword id="KW-1015">Disulfide bond</keyword>
<keyword id="KW-0325">Glycoprotein</keyword>
<keyword id="KW-0333">Golgi apparatus</keyword>
<keyword id="KW-0378">Hydrolase</keyword>
<keyword id="KW-0472">Membrane</keyword>
<keyword id="KW-0479">Metal-binding</keyword>
<keyword id="KW-0482">Metalloprotease</keyword>
<keyword id="KW-0489">Methyltransferase</keyword>
<keyword id="KW-0511">Multifunctional enzyme</keyword>
<keyword id="KW-0597">Phosphoprotein</keyword>
<keyword id="KW-0645">Protease</keyword>
<keyword id="KW-1185">Reference proteome</keyword>
<keyword id="KW-0735">Signal-anchor</keyword>
<keyword id="KW-0808">Transferase</keyword>
<keyword id="KW-0812">Transmembrane</keyword>
<keyword id="KW-1133">Transmembrane helix</keyword>
<keyword id="KW-0862">Zinc</keyword>
<dbReference type="EC" id="3.4.24.71" evidence="3"/>
<dbReference type="EC" id="2.1.1.-"/>
<dbReference type="EMBL" id="AC087898">
    <property type="status" value="NOT_ANNOTATED_CDS"/>
    <property type="molecule type" value="Genomic_DNA"/>
</dbReference>
<dbReference type="EMBL" id="AF489569">
    <property type="protein sequence ID" value="AAO72356.1"/>
    <property type="status" value="ALT_INIT"/>
    <property type="molecule type" value="mRNA"/>
</dbReference>
<dbReference type="EMBL" id="AF489570">
    <property type="protein sequence ID" value="AAO72357.1"/>
    <property type="status" value="ALT_INIT"/>
    <property type="molecule type" value="mRNA"/>
</dbReference>
<dbReference type="RefSeq" id="NP_808809.1">
    <molecule id="P0DPD9-1"/>
    <property type="nucleotide sequence ID" value="NM_177940.1"/>
</dbReference>
<dbReference type="RefSeq" id="NP_808810.1">
    <molecule id="P0DPD9-2"/>
    <property type="nucleotide sequence ID" value="NM_177941.1"/>
</dbReference>
<dbReference type="SMR" id="P0DPD9"/>
<dbReference type="FunCoup" id="P0DPD9">
    <property type="interactions" value="72"/>
</dbReference>
<dbReference type="STRING" id="10090.ENSMUSP00000113475"/>
<dbReference type="GlyCosmos" id="P0DPD9">
    <property type="glycosylation" value="9 sites, No reported glycans"/>
</dbReference>
<dbReference type="GlyGen" id="P0DPD9">
    <property type="glycosylation" value="9 sites, 1 N-linked glycan (2 sites)"/>
</dbReference>
<dbReference type="iPTMnet" id="P0DPD9"/>
<dbReference type="PhosphoSitePlus" id="P0DPD9"/>
<dbReference type="PaxDb" id="10090-ENSMUSP00000113475"/>
<dbReference type="ProteomicsDB" id="277448"/>
<dbReference type="ProteomicsDB" id="277449">
    <molecule id="P0DPD9-2"/>
</dbReference>
<dbReference type="Pumba" id="P0DPD9"/>
<dbReference type="Ensembl" id="ENSMUST00000079600.12">
    <molecule id="P0DPD9-1"/>
    <property type="protein sequence ID" value="ENSMUSP00000078550.5"/>
    <property type="gene ID" value="ENSMUSG00000115293.3"/>
</dbReference>
<dbReference type="Ensembl" id="ENSMUST00000120394.8">
    <molecule id="P0DPD9-2"/>
    <property type="protein sequence ID" value="ENSMUSP00000113475.2"/>
    <property type="gene ID" value="ENSMUSG00000115293.3"/>
</dbReference>
<dbReference type="GeneID" id="110599584"/>
<dbReference type="KEGG" id="mmu:110599584"/>
<dbReference type="CTD" id="110599584"/>
<dbReference type="MGI" id="MGI:1101356">
    <property type="gene designation" value="Eef1akmt4-Ece2"/>
</dbReference>
<dbReference type="VEuPathDB" id="HostDB:ENSMUSG00000115293"/>
<dbReference type="InParanoid" id="P0DPD9"/>
<dbReference type="OMA" id="FGWAQVW"/>
<dbReference type="OrthoDB" id="411785at2759"/>
<dbReference type="Reactome" id="R-MMU-375276">
    <property type="pathway name" value="Peptide ligand-binding receptors"/>
</dbReference>
<dbReference type="BioGRID-ORCS" id="107522">
    <property type="hits" value="5 hits in 75 CRISPR screens"/>
</dbReference>
<dbReference type="ChiTaRS" id="Ece2">
    <property type="organism name" value="mouse"/>
</dbReference>
<dbReference type="PRO" id="PR:P0DPD9"/>
<dbReference type="Proteomes" id="UP000000589">
    <property type="component" value="Chromosome 16"/>
</dbReference>
<dbReference type="Bgee" id="ENSMUSG00000115293">
    <property type="expression patterns" value="Expressed in ventricular zone and 29 other cell types or tissues"/>
</dbReference>
<dbReference type="GO" id="GO:0030659">
    <property type="term" value="C:cytoplasmic vesicle membrane"/>
    <property type="evidence" value="ECO:0000250"/>
    <property type="project" value="UniProtKB"/>
</dbReference>
<dbReference type="GO" id="GO:0000139">
    <property type="term" value="C:Golgi membrane"/>
    <property type="evidence" value="ECO:0000250"/>
    <property type="project" value="UniProtKB"/>
</dbReference>
<dbReference type="GO" id="GO:0005802">
    <property type="term" value="C:trans-Golgi network"/>
    <property type="evidence" value="ECO:0000250"/>
    <property type="project" value="MGI"/>
</dbReference>
<dbReference type="GO" id="GO:0030658">
    <property type="term" value="C:transport vesicle membrane"/>
    <property type="evidence" value="ECO:0000250"/>
    <property type="project" value="UniProtKB"/>
</dbReference>
<dbReference type="GO" id="GO:0046872">
    <property type="term" value="F:metal ion binding"/>
    <property type="evidence" value="ECO:0007669"/>
    <property type="project" value="UniProtKB-KW"/>
</dbReference>
<dbReference type="GO" id="GO:0004222">
    <property type="term" value="F:metalloendopeptidase activity"/>
    <property type="evidence" value="ECO:0000250"/>
    <property type="project" value="UniProtKB"/>
</dbReference>
<dbReference type="GO" id="GO:0008168">
    <property type="term" value="F:methyltransferase activity"/>
    <property type="evidence" value="ECO:0007669"/>
    <property type="project" value="UniProtKB-KW"/>
</dbReference>
<dbReference type="GO" id="GO:0007420">
    <property type="term" value="P:brain development"/>
    <property type="evidence" value="ECO:0000250"/>
    <property type="project" value="ARUK-UCL"/>
</dbReference>
<dbReference type="GO" id="GO:0010002">
    <property type="term" value="P:cardioblast differentiation"/>
    <property type="evidence" value="ECO:0000250"/>
    <property type="project" value="ARUK-UCL"/>
</dbReference>
<dbReference type="GO" id="GO:0007507">
    <property type="term" value="P:heart development"/>
    <property type="evidence" value="ECO:0000250"/>
    <property type="project" value="ARUK-UCL"/>
</dbReference>
<dbReference type="GO" id="GO:0032259">
    <property type="term" value="P:methylation"/>
    <property type="evidence" value="ECO:0007669"/>
    <property type="project" value="UniProtKB-KW"/>
</dbReference>
<dbReference type="GO" id="GO:0016486">
    <property type="term" value="P:peptide hormone processing"/>
    <property type="evidence" value="ECO:0000250"/>
    <property type="project" value="UniProtKB"/>
</dbReference>
<dbReference type="CDD" id="cd02440">
    <property type="entry name" value="AdoMet_MTases"/>
    <property type="match status" value="1"/>
</dbReference>
<dbReference type="CDD" id="cd08662">
    <property type="entry name" value="M13"/>
    <property type="match status" value="1"/>
</dbReference>
<dbReference type="FunFam" id="1.10.1380.10:FF:000001">
    <property type="entry name" value="endothelin-converting enzyme 2 isoform X1"/>
    <property type="match status" value="1"/>
</dbReference>
<dbReference type="FunFam" id="3.40.50.150:FF:000308">
    <property type="entry name" value="endothelin-converting enzyme 2 isoform X2"/>
    <property type="match status" value="1"/>
</dbReference>
<dbReference type="Gene3D" id="3.40.390.10">
    <property type="entry name" value="Collagenase (Catalytic Domain)"/>
    <property type="match status" value="1"/>
</dbReference>
<dbReference type="Gene3D" id="1.10.1380.10">
    <property type="entry name" value="Neutral endopeptidase , domain2"/>
    <property type="match status" value="1"/>
</dbReference>
<dbReference type="Gene3D" id="3.40.50.150">
    <property type="entry name" value="Vaccinia Virus protein VP39"/>
    <property type="match status" value="1"/>
</dbReference>
<dbReference type="InterPro" id="IPR024079">
    <property type="entry name" value="MetalloPept_cat_dom_sf"/>
</dbReference>
<dbReference type="InterPro" id="IPR041698">
    <property type="entry name" value="Methyltransf_25"/>
</dbReference>
<dbReference type="InterPro" id="IPR000718">
    <property type="entry name" value="Peptidase_M13"/>
</dbReference>
<dbReference type="InterPro" id="IPR018497">
    <property type="entry name" value="Peptidase_M13_C"/>
</dbReference>
<dbReference type="InterPro" id="IPR042089">
    <property type="entry name" value="Peptidase_M13_dom_2"/>
</dbReference>
<dbReference type="InterPro" id="IPR008753">
    <property type="entry name" value="Peptidase_M13_N"/>
</dbReference>
<dbReference type="InterPro" id="IPR029063">
    <property type="entry name" value="SAM-dependent_MTases_sf"/>
</dbReference>
<dbReference type="PANTHER" id="PTHR11733:SF127">
    <property type="entry name" value="EEF1AKMT4-ECE2 READTHROUGH TRANSCRIPT PROTEIN-RELATED"/>
    <property type="match status" value="1"/>
</dbReference>
<dbReference type="PANTHER" id="PTHR11733">
    <property type="entry name" value="ZINC METALLOPROTEASE FAMILY M13 NEPRILYSIN-RELATED"/>
    <property type="match status" value="1"/>
</dbReference>
<dbReference type="Pfam" id="PF13649">
    <property type="entry name" value="Methyltransf_25"/>
    <property type="match status" value="1"/>
</dbReference>
<dbReference type="Pfam" id="PF01431">
    <property type="entry name" value="Peptidase_M13"/>
    <property type="match status" value="1"/>
</dbReference>
<dbReference type="Pfam" id="PF05649">
    <property type="entry name" value="Peptidase_M13_N"/>
    <property type="match status" value="1"/>
</dbReference>
<dbReference type="PRINTS" id="PR00786">
    <property type="entry name" value="NEPRILYSIN"/>
</dbReference>
<dbReference type="SUPFAM" id="SSF55486">
    <property type="entry name" value="Metalloproteases ('zincins'), catalytic domain"/>
    <property type="match status" value="1"/>
</dbReference>
<dbReference type="SUPFAM" id="SSF53335">
    <property type="entry name" value="S-adenosyl-L-methionine-dependent methyltransferases"/>
    <property type="match status" value="1"/>
</dbReference>
<dbReference type="PROSITE" id="PS51885">
    <property type="entry name" value="NEPRILYSIN"/>
    <property type="match status" value="1"/>
</dbReference>
<dbReference type="PROSITE" id="PS00142">
    <property type="entry name" value="ZINC_PROTEASE"/>
    <property type="match status" value="1"/>
</dbReference>
<protein>
    <recommendedName>
        <fullName evidence="2">EEF1AKMT4-ECE2 readthrough transcript protein</fullName>
        <ecNumber evidence="3">3.4.24.71</ecNumber>
    </recommendedName>
    <domain>
        <recommendedName>
            <fullName evidence="11">Methyltransferase-like region</fullName>
            <ecNumber>2.1.1.-</ecNumber>
        </recommendedName>
    </domain>
    <domain>
        <recommendedName>
            <fullName evidence="11">Endothelin-converting enzyme 2 region</fullName>
            <ecNumber>3.4.24.71</ecNumber>
        </recommendedName>
    </domain>
</protein>
<feature type="chain" id="PRO_0000310760" description="EEF1AKMT4-ECE2 readthrough transcript protein">
    <location>
        <begin position="1"/>
        <end position="881"/>
    </location>
</feature>
<feature type="topological domain" description="Cytoplasmic" evidence="11">
    <location>
        <begin position="1"/>
        <end position="178"/>
    </location>
</feature>
<feature type="transmembrane region" description="Helical; Signal-anchor for type II membrane protein" evidence="5">
    <location>
        <begin position="179"/>
        <end position="199"/>
    </location>
</feature>
<feature type="topological domain" description="Lumenal" evidence="11">
    <location>
        <begin position="200"/>
        <end position="881"/>
    </location>
</feature>
<feature type="domain" description="Peptidase M13" evidence="6">
    <location>
        <begin position="209"/>
        <end position="881"/>
    </location>
</feature>
<feature type="region of interest" description="Methyltransferase-like region" evidence="11">
    <location>
        <begin position="1"/>
        <end position="160"/>
    </location>
</feature>
<feature type="active site" evidence="6 7">
    <location>
        <position position="719"/>
    </location>
</feature>
<feature type="active site" description="Proton donor" evidence="6">
    <location>
        <position position="782"/>
    </location>
</feature>
<feature type="binding site" evidence="1">
    <location>
        <position position="26"/>
    </location>
    <ligand>
        <name>S-adenosyl-L-methionine</name>
        <dbReference type="ChEBI" id="CHEBI:59789"/>
    </ligand>
</feature>
<feature type="binding site" evidence="1">
    <location>
        <position position="30"/>
    </location>
    <ligand>
        <name>S-adenosyl-L-methionine</name>
        <dbReference type="ChEBI" id="CHEBI:59789"/>
    </ligand>
</feature>
<feature type="binding site" evidence="1">
    <location>
        <position position="41"/>
    </location>
    <ligand>
        <name>S-adenosyl-L-methionine</name>
        <dbReference type="ChEBI" id="CHEBI:59789"/>
    </ligand>
</feature>
<feature type="binding site" evidence="1">
    <location>
        <position position="66"/>
    </location>
    <ligand>
        <name>S-adenosyl-L-methionine</name>
        <dbReference type="ChEBI" id="CHEBI:59789"/>
    </ligand>
</feature>
<feature type="binding site" evidence="1">
    <location>
        <begin position="88"/>
        <end position="89"/>
    </location>
    <ligand>
        <name>S-adenosyl-L-methionine</name>
        <dbReference type="ChEBI" id="CHEBI:59789"/>
    </ligand>
</feature>
<feature type="binding site" evidence="1">
    <location>
        <begin position="113"/>
        <end position="114"/>
    </location>
    <ligand>
        <name>S-adenosyl-L-methionine</name>
        <dbReference type="ChEBI" id="CHEBI:59789"/>
    </ligand>
</feature>
<feature type="binding site" evidence="1">
    <location>
        <position position="130"/>
    </location>
    <ligand>
        <name>S-adenosyl-L-methionine</name>
        <dbReference type="ChEBI" id="CHEBI:59789"/>
    </ligand>
</feature>
<feature type="binding site" evidence="6 7">
    <location>
        <position position="718"/>
    </location>
    <ligand>
        <name>Zn(2+)</name>
        <dbReference type="ChEBI" id="CHEBI:29105"/>
        <note>catalytic</note>
    </ligand>
</feature>
<feature type="binding site" evidence="6 7">
    <location>
        <position position="722"/>
    </location>
    <ligand>
        <name>Zn(2+)</name>
        <dbReference type="ChEBI" id="CHEBI:29105"/>
        <note>catalytic</note>
    </ligand>
</feature>
<feature type="binding site" evidence="6">
    <location>
        <position position="778"/>
    </location>
    <ligand>
        <name>Zn(2+)</name>
        <dbReference type="ChEBI" id="CHEBI:29105"/>
        <note>catalytic</note>
    </ligand>
</feature>
<feature type="modified residue" description="Phosphotyrosine" evidence="2">
    <location>
        <position position="39"/>
    </location>
</feature>
<feature type="glycosylation site" description="N-linked (GlcNAc...) asparagine" evidence="5">
    <location>
        <position position="277"/>
    </location>
</feature>
<feature type="glycosylation site" description="N-linked (GlcNAc...) asparagine" evidence="5">
    <location>
        <position position="281"/>
    </location>
</feature>
<feature type="glycosylation site" description="N-linked (GlcNAc...) asparagine" evidence="5">
    <location>
        <position position="322"/>
    </location>
</feature>
<feature type="glycosylation site" description="N-linked (GlcNAc...) asparagine" evidence="5">
    <location>
        <position position="382"/>
    </location>
</feature>
<feature type="glycosylation site" description="N-linked (GlcNAc...) asparagine" evidence="5">
    <location>
        <position position="427"/>
    </location>
</feature>
<feature type="glycosylation site" description="N-linked (GlcNAc...) asparagine" evidence="5">
    <location>
        <position position="494"/>
    </location>
</feature>
<feature type="glycosylation site" description="N-linked (GlcNAc...) asparagine" evidence="5">
    <location>
        <position position="650"/>
    </location>
</feature>
<feature type="glycosylation site" description="N-linked (GlcNAc...) asparagine" evidence="5">
    <location>
        <position position="743"/>
    </location>
</feature>
<feature type="glycosylation site" description="N-linked (GlcNAc...) asparagine" evidence="5">
    <location>
        <position position="751"/>
    </location>
</feature>
<feature type="disulfide bond" evidence="6">
    <location>
        <begin position="210"/>
        <end position="215"/>
    </location>
</feature>
<feature type="disulfide bond" evidence="6">
    <location>
        <begin position="233"/>
        <end position="866"/>
    </location>
</feature>
<feature type="disulfide bond" evidence="6">
    <location>
        <begin position="241"/>
        <end position="826"/>
    </location>
</feature>
<feature type="disulfide bond" evidence="6">
    <location>
        <begin position="297"/>
        <end position="546"/>
    </location>
</feature>
<feature type="disulfide bond" evidence="6">
    <location>
        <begin position="755"/>
        <end position="878"/>
    </location>
</feature>
<feature type="splice variant" id="VSP_029335" description="In isoform Eef1akmt4-Ece2-2." evidence="10">
    <original>S</original>
    <variation>SEMVEYKRAKLRDEESPEITVEGRATRDSL</variation>
    <location>
        <position position="159"/>
    </location>
</feature>
<feature type="sequence conflict" description="In Ref. 2; AAO72356/AAO72357." evidence="11" ref="2">
    <original>SSNSNII</original>
    <variation>RSYSNIT</variation>
    <location>
        <begin position="359"/>
        <end position="365"/>
    </location>
</feature>
<feature type="sequence conflict" description="In Ref. 2; AAO72356/AAO72357." evidence="11" ref="2">
    <original>TE</original>
    <variation>MS</variation>
    <location>
        <begin position="483"/>
        <end position="484"/>
    </location>
</feature>
<feature type="sequence conflict" description="In Ref. 2; AAO72356/AAO72357." evidence="11" ref="2">
    <original>D</original>
    <variation>Y</variation>
    <location>
        <position position="632"/>
    </location>
</feature>
<feature type="sequence conflict" description="In Ref. 2; AAO72356/AAO72357." evidence="11" ref="2">
    <original>A</original>
    <variation>P</variation>
    <location>
        <position position="696"/>
    </location>
</feature>
<feature type="sequence conflict" description="In Ref. 2; AAO72356/AAO72357." evidence="11" ref="2">
    <original>G</original>
    <variation>D</variation>
    <location>
        <position position="717"/>
    </location>
</feature>
<feature type="modified residue" description="Phosphoserine" evidence="12">
    <location sequence="P0DPD9-2">
        <position position="174"/>
    </location>
</feature>
<organism>
    <name type="scientific">Mus musculus</name>
    <name type="common">Mouse</name>
    <dbReference type="NCBI Taxonomy" id="10090"/>
    <lineage>
        <taxon>Eukaryota</taxon>
        <taxon>Metazoa</taxon>
        <taxon>Chordata</taxon>
        <taxon>Craniata</taxon>
        <taxon>Vertebrata</taxon>
        <taxon>Euteleostomi</taxon>
        <taxon>Mammalia</taxon>
        <taxon>Eutheria</taxon>
        <taxon>Euarchontoglires</taxon>
        <taxon>Glires</taxon>
        <taxon>Rodentia</taxon>
        <taxon>Myomorpha</taxon>
        <taxon>Muroidea</taxon>
        <taxon>Muridae</taxon>
        <taxon>Murinae</taxon>
        <taxon>Mus</taxon>
        <taxon>Mus</taxon>
    </lineage>
</organism>
<name>EFCE2_MOUSE</name>
<sequence length="881" mass="99480">MASPRTPVSPPELPEKNFQYRQVQYWDQRYKDAADSGPYEWFGDFASFRALLEPELCPEDRILVLGCGNSALSYELFLGGFPNVTSVDYSPVVVAAMQVRYAHVPSLRWETMDVRALDFPSGSFDVVLEKGTLDAMLAGEPDPWNVSSEGVHTVDQVLSEVGFQKRTRQLFGSHTQLELVLAGLILVLAALLLGCLVALWVHRDPAHSTCVTEACIRVAGKILESLDRGVSPCQDFYQFSCGGWIRRNPLPNGRSRWNTFNSLWDQNQAILKHLLENTTFNSSSEAERKTRSFYLSCLQSERIEKLGAKPLRDLIDKIGGWNITGPWDEDSFMDVLKAVAGTYRATPFFTVYVSADSKSSNSNIIQVDQSGLFLPSRDYYLNRTANEKVLTAYLDYMVELGVLLGGQPTSTREQMQQVLELEIQLANITVPQDQRRDEEKIYHKMSISELQALAPAVDWLEFLSFLLSPLELGDSEPVVVYGTEYLQQVSELINRTEPSILNNYLIWNLVQKTTSSLDQRFETAQEKLLETLYGTKKSCTPRWQTCISNTDDALGFALGSLFVKATFDRQSKEIAEGMINEIRSAFEETLGDLVWMDEKTRLAAKEKADAIYDMIGFPDFILEPKELDDVYDGYEVSEDSFFQNMLNLYNFSAKVMADQLRKPPSRDQWSMTPQTVNAYYLPTKNEIVFPAGILQAPFYAHNHPKALNFGGIGVVMGHELTHAFDDQGREYDKEGNLRPWWQNESLTAFQNHTACMEEQYSQYQVNGERLNGLQTLGENIADNGGLKAAYNAYKAWLRKHGEEQPLPAVGLTNHQLFFVGFAQVWCSVRTPESSHEGLVTDPHSPARFRVLGTLSNSRDFLRHFGCPVGSPMNPGQLCEVW</sequence>
<accession>P0DPD9</accession>
<accession>E9QKA6</accession>
<accession>Q14BY3</accession>
<accession>Q80Z59</accession>
<accession>Q80Z60</accession>
<accession>Q9D8Q9</accession>
<accession>Q9D928</accession>
<comment type="function">
    <text evidence="3 9">Converts big endothelin-1 to endothelin-1. May also have methyltransferase activity (By similarity). May play a role in amyloid-beta processing (PubMed:12464614).</text>
</comment>
<comment type="catalytic activity">
    <reaction evidence="3">
        <text>Hydrolysis of the 21-Trp-|-Val-22 bond in big endothelin to form endothelin 1.</text>
        <dbReference type="EC" id="3.4.24.71"/>
    </reaction>
</comment>
<comment type="cofactor">
    <cofactor evidence="4">
        <name>Zn(2+)</name>
        <dbReference type="ChEBI" id="CHEBI:29105"/>
    </cofactor>
    <text evidence="4">Binds 1 zinc ion per subunit.</text>
</comment>
<comment type="activity regulation">
    <text evidence="3">Inhibited by phosphoramidon.</text>
</comment>
<comment type="subcellular location">
    <subcellularLocation>
        <location evidence="3">Golgi apparatus membrane</location>
        <topology evidence="3">Single-pass type II membrane protein</topology>
    </subcellularLocation>
    <subcellularLocation>
        <location evidence="3">Cytoplasmic vesicle</location>
        <location evidence="3">Secretory vesicle membrane</location>
    </subcellularLocation>
</comment>
<comment type="alternative products">
    <event type="alternative splicing"/>
    <isoform>
        <id>P0DPD9-1</id>
        <id>Q80Z60-1</id>
        <name>Eef1akmt4-Ece2-1</name>
        <name evidence="10">ECE-2a-1</name>
        <sequence type="displayed"/>
    </isoform>
    <isoform>
        <id>P0DPD9-2</id>
        <id>Q80Z60-2</id>
        <name>Eef1akmt4-Ece2-2</name>
        <name evidence="10">ECE-2a-2</name>
        <sequence type="described" ref="VSP_029335"/>
    </isoform>
    <isoform>
        <id>P0DPE0-1</id>
        <id>Q80Z60-3</id>
        <name>Eef1akmt4-1</name>
        <sequence type="external"/>
    </isoform>
    <isoform>
        <id>B2RQR8-1</id>
        <name>Ece2-1</name>
        <sequence type="external"/>
    </isoform>
    <isoform>
        <id>B2RQR8-2</id>
        <name>Ece2-2</name>
        <sequence type="external"/>
    </isoform>
</comment>
<comment type="tissue specificity">
    <text evidence="8">Expressed at high levels in central nervous system. Expressed in adrenal glands, ovary and uterus, and at low levels in heart.</text>
</comment>
<comment type="developmental stage">
    <text evidence="8">Weakly expressed in mesenchyme and parts of neural tube at 10.5 dpc. At 13.5 dpc, expressed in anterior part of neural tube, dorsal root ganglia, bilateral sympathetic trunk and heart.</text>
</comment>
<comment type="disruption phenotype">
    <text evidence="8">Eef1akmt4-Ece2 and Ece2 double mutant mice are fertile and healthy, and do not display any abnormality in terms of growth or aging.</text>
</comment>
<comment type="miscellaneous">
    <molecule>Isoform Eef1akmt4-Ece2-1</molecule>
    <text evidence="11">Based on a naturally occurring readthrough transcript which produces an Eef1akmt4-Ece2 fusion protein.</text>
</comment>
<comment type="miscellaneous">
    <molecule>Isoform Eef1akmt4-Ece2-2</molecule>
    <text evidence="11">Based on a naturally occurring readthrough transcript which produces an Eef1akmt4-Ece2 fusion protein.</text>
</comment>
<comment type="similarity">
    <text evidence="11">In the N-terminal section; belongs to the methyltransferase superfamily.</text>
</comment>
<comment type="similarity">
    <text evidence="11">In the C-terminal section; belongs to the peptidase M13 family.</text>
</comment>
<comment type="sequence caution" evidence="11">
    <conflict type="erroneous initiation">
        <sequence resource="EMBL-CDS" id="AAO72356"/>
    </conflict>
    <text>Truncated N-terminus.</text>
</comment>
<comment type="sequence caution" evidence="11">
    <conflict type="erroneous initiation">
        <sequence resource="EMBL-CDS" id="AAO72357"/>
    </conflict>
    <text>Truncated N-terminus.</text>
</comment>
<evidence type="ECO:0000250" key="1">
    <source>
        <dbReference type="UniProtKB" id="P0DPD7"/>
    </source>
</evidence>
<evidence type="ECO:0000250" key="2">
    <source>
        <dbReference type="UniProtKB" id="P0DPD8"/>
    </source>
</evidence>
<evidence type="ECO:0000250" key="3">
    <source>
        <dbReference type="UniProtKB" id="P0DPE2"/>
    </source>
</evidence>
<evidence type="ECO:0000250" key="4">
    <source>
        <dbReference type="UniProtKB" id="P42892"/>
    </source>
</evidence>
<evidence type="ECO:0000255" key="5"/>
<evidence type="ECO:0000255" key="6">
    <source>
        <dbReference type="PROSITE-ProRule" id="PRU01233"/>
    </source>
</evidence>
<evidence type="ECO:0000255" key="7">
    <source>
        <dbReference type="PROSITE-ProRule" id="PRU10095"/>
    </source>
</evidence>
<evidence type="ECO:0000269" key="8">
    <source>
    </source>
</evidence>
<evidence type="ECO:0000269" key="9">
    <source>
    </source>
</evidence>
<evidence type="ECO:0000303" key="10">
    <source>
    </source>
</evidence>
<evidence type="ECO:0000305" key="11"/>
<evidence type="ECO:0007744" key="12">
    <source>
    </source>
</evidence>
<reference key="1">
    <citation type="journal article" date="2009" name="PLoS Biol.">
        <title>Lineage-specific biology revealed by a finished genome assembly of the mouse.</title>
        <authorList>
            <person name="Church D.M."/>
            <person name="Goodstadt L."/>
            <person name="Hillier L.W."/>
            <person name="Zody M.C."/>
            <person name="Goldstein S."/>
            <person name="She X."/>
            <person name="Bult C.J."/>
            <person name="Agarwala R."/>
            <person name="Cherry J.L."/>
            <person name="DiCuccio M."/>
            <person name="Hlavina W."/>
            <person name="Kapustin Y."/>
            <person name="Meric P."/>
            <person name="Maglott D."/>
            <person name="Birtle Z."/>
            <person name="Marques A.C."/>
            <person name="Graves T."/>
            <person name="Zhou S."/>
            <person name="Teague B."/>
            <person name="Potamousis K."/>
            <person name="Churas C."/>
            <person name="Place M."/>
            <person name="Herschleb J."/>
            <person name="Runnheim R."/>
            <person name="Forrest D."/>
            <person name="Amos-Landgraf J."/>
            <person name="Schwartz D.C."/>
            <person name="Cheng Z."/>
            <person name="Lindblad-Toh K."/>
            <person name="Eichler E.E."/>
            <person name="Ponting C.P."/>
        </authorList>
    </citation>
    <scope>NUCLEOTIDE SEQUENCE [LARGE SCALE GENOMIC DNA]</scope>
    <source>
        <strain>C57BL/6J</strain>
    </source>
</reference>
<reference key="2">
    <citation type="journal article" date="2002" name="Biochem. Biophys. Res. Commun.">
        <title>Molecular isolation and characterization of novel four subisoforms of ECE-2.</title>
        <authorList>
            <person name="Ikeda S."/>
            <person name="Emoto N."/>
            <person name="Alimsardjono H."/>
            <person name="Yokoyama M."/>
            <person name="Matsuo M."/>
        </authorList>
    </citation>
    <scope>NUCLEOTIDE SEQUENCE [MRNA] OF 58-881 (ISOFORMS EEF1AKMT4-ECE2-1 AND EEF1AKMT4-ECE2-2)</scope>
</reference>
<reference key="3">
    <citation type="journal article" date="2000" name="J. Clin. Invest.">
        <title>Disruption of ECE-1 and ECE-2 reveals a role for endothelin-converting enzyme-2 in murine cardiac development.</title>
        <authorList>
            <person name="Yanagisawa H."/>
            <person name="Hammer R.E."/>
            <person name="Richardson J.A."/>
            <person name="Emoto N."/>
            <person name="Williams S.C."/>
            <person name="Takeda S."/>
            <person name="Clouthier D.E."/>
            <person name="Yanagisawa M."/>
        </authorList>
    </citation>
    <scope>TISSUE SPECIFICITY</scope>
    <scope>DEVELOPMENTAL STAGE</scope>
    <scope>DISRUPTION PHENOTYPE</scope>
</reference>
<reference key="4">
    <citation type="journal article" date="2003" name="J. Biol. Chem.">
        <title>Alzheimer's disease beta-amyloid peptide is increased in mice deficient in endothelin-converting enzyme.</title>
        <authorList>
            <person name="Eckman E.A."/>
            <person name="Watson M."/>
            <person name="Marlow L."/>
            <person name="Sambamurti K."/>
            <person name="Eckman C.B."/>
        </authorList>
    </citation>
    <scope>FUNCTION</scope>
</reference>
<reference key="5">
    <citation type="journal article" date="2010" name="Cell">
        <title>A tissue-specific atlas of mouse protein phosphorylation and expression.</title>
        <authorList>
            <person name="Huttlin E.L."/>
            <person name="Jedrychowski M.P."/>
            <person name="Elias J.E."/>
            <person name="Goswami T."/>
            <person name="Rad R."/>
            <person name="Beausoleil S.A."/>
            <person name="Villen J."/>
            <person name="Haas W."/>
            <person name="Sowa M.E."/>
            <person name="Gygi S.P."/>
        </authorList>
    </citation>
    <scope>PHOSPHORYLATION [LARGE SCALE ANALYSIS] AT SER-174 (ISOFORM EEF1AKMT4-ECE2-2)</scope>
    <scope>IDENTIFICATION BY MASS SPECTROMETRY [LARGE SCALE ANALYSIS]</scope>
    <source>
        <tissue>Brain</tissue>
    </source>
</reference>
<proteinExistence type="evidence at protein level"/>